<reference key="1">
    <citation type="journal article" date="2005" name="Science">
        <title>The transcriptional landscape of the mammalian genome.</title>
        <authorList>
            <person name="Carninci P."/>
            <person name="Kasukawa T."/>
            <person name="Katayama S."/>
            <person name="Gough J."/>
            <person name="Frith M.C."/>
            <person name="Maeda N."/>
            <person name="Oyama R."/>
            <person name="Ravasi T."/>
            <person name="Lenhard B."/>
            <person name="Wells C."/>
            <person name="Kodzius R."/>
            <person name="Shimokawa K."/>
            <person name="Bajic V.B."/>
            <person name="Brenner S.E."/>
            <person name="Batalov S."/>
            <person name="Forrest A.R."/>
            <person name="Zavolan M."/>
            <person name="Davis M.J."/>
            <person name="Wilming L.G."/>
            <person name="Aidinis V."/>
            <person name="Allen J.E."/>
            <person name="Ambesi-Impiombato A."/>
            <person name="Apweiler R."/>
            <person name="Aturaliya R.N."/>
            <person name="Bailey T.L."/>
            <person name="Bansal M."/>
            <person name="Baxter L."/>
            <person name="Beisel K.W."/>
            <person name="Bersano T."/>
            <person name="Bono H."/>
            <person name="Chalk A.M."/>
            <person name="Chiu K.P."/>
            <person name="Choudhary V."/>
            <person name="Christoffels A."/>
            <person name="Clutterbuck D.R."/>
            <person name="Crowe M.L."/>
            <person name="Dalla E."/>
            <person name="Dalrymple B.P."/>
            <person name="de Bono B."/>
            <person name="Della Gatta G."/>
            <person name="di Bernardo D."/>
            <person name="Down T."/>
            <person name="Engstrom P."/>
            <person name="Fagiolini M."/>
            <person name="Faulkner G."/>
            <person name="Fletcher C.F."/>
            <person name="Fukushima T."/>
            <person name="Furuno M."/>
            <person name="Futaki S."/>
            <person name="Gariboldi M."/>
            <person name="Georgii-Hemming P."/>
            <person name="Gingeras T.R."/>
            <person name="Gojobori T."/>
            <person name="Green R.E."/>
            <person name="Gustincich S."/>
            <person name="Harbers M."/>
            <person name="Hayashi Y."/>
            <person name="Hensch T.K."/>
            <person name="Hirokawa N."/>
            <person name="Hill D."/>
            <person name="Huminiecki L."/>
            <person name="Iacono M."/>
            <person name="Ikeo K."/>
            <person name="Iwama A."/>
            <person name="Ishikawa T."/>
            <person name="Jakt M."/>
            <person name="Kanapin A."/>
            <person name="Katoh M."/>
            <person name="Kawasawa Y."/>
            <person name="Kelso J."/>
            <person name="Kitamura H."/>
            <person name="Kitano H."/>
            <person name="Kollias G."/>
            <person name="Krishnan S.P."/>
            <person name="Kruger A."/>
            <person name="Kummerfeld S.K."/>
            <person name="Kurochkin I.V."/>
            <person name="Lareau L.F."/>
            <person name="Lazarevic D."/>
            <person name="Lipovich L."/>
            <person name="Liu J."/>
            <person name="Liuni S."/>
            <person name="McWilliam S."/>
            <person name="Madan Babu M."/>
            <person name="Madera M."/>
            <person name="Marchionni L."/>
            <person name="Matsuda H."/>
            <person name="Matsuzawa S."/>
            <person name="Miki H."/>
            <person name="Mignone F."/>
            <person name="Miyake S."/>
            <person name="Morris K."/>
            <person name="Mottagui-Tabar S."/>
            <person name="Mulder N."/>
            <person name="Nakano N."/>
            <person name="Nakauchi H."/>
            <person name="Ng P."/>
            <person name="Nilsson R."/>
            <person name="Nishiguchi S."/>
            <person name="Nishikawa S."/>
            <person name="Nori F."/>
            <person name="Ohara O."/>
            <person name="Okazaki Y."/>
            <person name="Orlando V."/>
            <person name="Pang K.C."/>
            <person name="Pavan W.J."/>
            <person name="Pavesi G."/>
            <person name="Pesole G."/>
            <person name="Petrovsky N."/>
            <person name="Piazza S."/>
            <person name="Reed J."/>
            <person name="Reid J.F."/>
            <person name="Ring B.Z."/>
            <person name="Ringwald M."/>
            <person name="Rost B."/>
            <person name="Ruan Y."/>
            <person name="Salzberg S.L."/>
            <person name="Sandelin A."/>
            <person name="Schneider C."/>
            <person name="Schoenbach C."/>
            <person name="Sekiguchi K."/>
            <person name="Semple C.A."/>
            <person name="Seno S."/>
            <person name="Sessa L."/>
            <person name="Sheng Y."/>
            <person name="Shibata Y."/>
            <person name="Shimada H."/>
            <person name="Shimada K."/>
            <person name="Silva D."/>
            <person name="Sinclair B."/>
            <person name="Sperling S."/>
            <person name="Stupka E."/>
            <person name="Sugiura K."/>
            <person name="Sultana R."/>
            <person name="Takenaka Y."/>
            <person name="Taki K."/>
            <person name="Tammoja K."/>
            <person name="Tan S.L."/>
            <person name="Tang S."/>
            <person name="Taylor M.S."/>
            <person name="Tegner J."/>
            <person name="Teichmann S.A."/>
            <person name="Ueda H.R."/>
            <person name="van Nimwegen E."/>
            <person name="Verardo R."/>
            <person name="Wei C.L."/>
            <person name="Yagi K."/>
            <person name="Yamanishi H."/>
            <person name="Zabarovsky E."/>
            <person name="Zhu S."/>
            <person name="Zimmer A."/>
            <person name="Hide W."/>
            <person name="Bult C."/>
            <person name="Grimmond S.M."/>
            <person name="Teasdale R.D."/>
            <person name="Liu E.T."/>
            <person name="Brusic V."/>
            <person name="Quackenbush J."/>
            <person name="Wahlestedt C."/>
            <person name="Mattick J.S."/>
            <person name="Hume D.A."/>
            <person name="Kai C."/>
            <person name="Sasaki D."/>
            <person name="Tomaru Y."/>
            <person name="Fukuda S."/>
            <person name="Kanamori-Katayama M."/>
            <person name="Suzuki M."/>
            <person name="Aoki J."/>
            <person name="Arakawa T."/>
            <person name="Iida J."/>
            <person name="Imamura K."/>
            <person name="Itoh M."/>
            <person name="Kato T."/>
            <person name="Kawaji H."/>
            <person name="Kawagashira N."/>
            <person name="Kawashima T."/>
            <person name="Kojima M."/>
            <person name="Kondo S."/>
            <person name="Konno H."/>
            <person name="Nakano K."/>
            <person name="Ninomiya N."/>
            <person name="Nishio T."/>
            <person name="Okada M."/>
            <person name="Plessy C."/>
            <person name="Shibata K."/>
            <person name="Shiraki T."/>
            <person name="Suzuki S."/>
            <person name="Tagami M."/>
            <person name="Waki K."/>
            <person name="Watahiki A."/>
            <person name="Okamura-Oho Y."/>
            <person name="Suzuki H."/>
            <person name="Kawai J."/>
            <person name="Hayashizaki Y."/>
        </authorList>
    </citation>
    <scope>NUCLEOTIDE SEQUENCE [LARGE SCALE MRNA] (ISOFORM 1)</scope>
    <source>
        <strain>C57BL/6J</strain>
        <tissue>Cerebellum</tissue>
        <tissue>Head</tissue>
        <tissue>Thymus</tissue>
    </source>
</reference>
<reference key="2">
    <citation type="journal article" date="2004" name="Genome Res.">
        <title>The status, quality, and expansion of the NIH full-length cDNA project: the Mammalian Gene Collection (MGC).</title>
        <authorList>
            <consortium name="The MGC Project Team"/>
        </authorList>
    </citation>
    <scope>NUCLEOTIDE SEQUENCE [LARGE SCALE MRNA] (ISOFORM 2)</scope>
    <source>
        <tissue>Mammary tumor</tissue>
    </source>
</reference>
<reference key="3">
    <citation type="journal article" date="2016" name="J. Biol. Chem.">
        <title>The A-kinase Anchoring Protein GSKIP Regulates GSK3beta Activity and Controls Palatal Shelf Fusion in Mice.</title>
        <authorList>
            <person name="Deak V.A."/>
            <person name="Skroblin P."/>
            <person name="Dittmayer C."/>
            <person name="Knobeloch K.P."/>
            <person name="Bachmann S."/>
            <person name="Klussmann E."/>
        </authorList>
    </citation>
    <scope>DISRUPTION PHENOTYPE</scope>
    <scope>FUNCTION</scope>
</reference>
<name>GSKIP_MOUSE</name>
<gene>
    <name evidence="5" type="primary">Gskip</name>
</gene>
<organism>
    <name type="scientific">Mus musculus</name>
    <name type="common">Mouse</name>
    <dbReference type="NCBI Taxonomy" id="10090"/>
    <lineage>
        <taxon>Eukaryota</taxon>
        <taxon>Metazoa</taxon>
        <taxon>Chordata</taxon>
        <taxon>Craniata</taxon>
        <taxon>Vertebrata</taxon>
        <taxon>Euteleostomi</taxon>
        <taxon>Mammalia</taxon>
        <taxon>Eutheria</taxon>
        <taxon>Euarchontoglires</taxon>
        <taxon>Glires</taxon>
        <taxon>Rodentia</taxon>
        <taxon>Myomorpha</taxon>
        <taxon>Muroidea</taxon>
        <taxon>Muridae</taxon>
        <taxon>Murinae</taxon>
        <taxon>Mus</taxon>
        <taxon>Mus</taxon>
    </lineage>
</organism>
<protein>
    <recommendedName>
        <fullName evidence="1">GSK3B-interacting protein</fullName>
        <shortName evidence="1">GSKIP</shortName>
    </recommendedName>
</protein>
<proteinExistence type="evidence at transcript level"/>
<evidence type="ECO:0000250" key="1">
    <source>
        <dbReference type="UniProtKB" id="Q9P0R6"/>
    </source>
</evidence>
<evidence type="ECO:0000269" key="2">
    <source>
    </source>
</evidence>
<evidence type="ECO:0000303" key="3">
    <source>
    </source>
</evidence>
<evidence type="ECO:0000305" key="4"/>
<evidence type="ECO:0000312" key="5">
    <source>
        <dbReference type="MGI" id="MGI:1914037"/>
    </source>
</evidence>
<dbReference type="EMBL" id="AK029484">
    <property type="protein sequence ID" value="BAC26470.1"/>
    <property type="molecule type" value="mRNA"/>
</dbReference>
<dbReference type="EMBL" id="AK042664">
    <property type="protein sequence ID" value="BAC31325.1"/>
    <property type="molecule type" value="mRNA"/>
</dbReference>
<dbReference type="EMBL" id="AK079775">
    <property type="protein sequence ID" value="BAC37748.1"/>
    <property type="molecule type" value="mRNA"/>
</dbReference>
<dbReference type="EMBL" id="BC031494">
    <property type="protein sequence ID" value="AAH31494.1"/>
    <property type="molecule type" value="mRNA"/>
</dbReference>
<dbReference type="CCDS" id="CCDS49161.1">
    <molecule id="Q8BGR8-2"/>
</dbReference>
<dbReference type="RefSeq" id="NP_848728.2">
    <molecule id="Q8BGR8-2"/>
    <property type="nucleotide sequence ID" value="NM_178613.3"/>
</dbReference>
<dbReference type="SMR" id="Q8BGR8"/>
<dbReference type="BioGRID" id="211719">
    <property type="interactions" value="9"/>
</dbReference>
<dbReference type="FunCoup" id="Q8BGR8">
    <property type="interactions" value="3033"/>
</dbReference>
<dbReference type="STRING" id="10090.ENSMUSP00000057939"/>
<dbReference type="PaxDb" id="10090-ENSMUSP00000057939"/>
<dbReference type="ProteomicsDB" id="271055">
    <molecule id="Q8BGR8-1"/>
</dbReference>
<dbReference type="ProteomicsDB" id="271056">
    <molecule id="Q8BGR8-2"/>
</dbReference>
<dbReference type="Pumba" id="Q8BGR8"/>
<dbReference type="Antibodypedia" id="27335">
    <property type="antibodies" value="85 antibodies from 17 providers"/>
</dbReference>
<dbReference type="DNASU" id="66787"/>
<dbReference type="Ensembl" id="ENSMUST00000051934.7">
    <molecule id="Q8BGR8-2"/>
    <property type="protein sequence ID" value="ENSMUSP00000057939.6"/>
    <property type="gene ID" value="ENSMUSG00000044715.8"/>
</dbReference>
<dbReference type="GeneID" id="66787"/>
<dbReference type="KEGG" id="mmu:66787"/>
<dbReference type="AGR" id="MGI:1914037"/>
<dbReference type="CTD" id="51527"/>
<dbReference type="MGI" id="MGI:1914037">
    <property type="gene designation" value="Gskip"/>
</dbReference>
<dbReference type="VEuPathDB" id="HostDB:ENSMUSG00000044715"/>
<dbReference type="eggNOG" id="KOG3965">
    <property type="taxonomic scope" value="Eukaryota"/>
</dbReference>
<dbReference type="GeneTree" id="ENSGT00390000009517"/>
<dbReference type="HOGENOM" id="CLU_143747_0_0_1"/>
<dbReference type="InParanoid" id="Q8BGR8"/>
<dbReference type="OMA" id="FAVTEMH"/>
<dbReference type="OrthoDB" id="5804279at2759"/>
<dbReference type="TreeFam" id="TF313906"/>
<dbReference type="BioGRID-ORCS" id="66787">
    <property type="hits" value="5 hits in 76 CRISPR screens"/>
</dbReference>
<dbReference type="ChiTaRS" id="Gskip">
    <property type="organism name" value="mouse"/>
</dbReference>
<dbReference type="PRO" id="PR:Q8BGR8"/>
<dbReference type="Proteomes" id="UP000000589">
    <property type="component" value="Chromosome 12"/>
</dbReference>
<dbReference type="RNAct" id="Q8BGR8">
    <property type="molecule type" value="protein"/>
</dbReference>
<dbReference type="Bgee" id="ENSMUSG00000044715">
    <property type="expression patterns" value="Expressed in placenta labyrinth and 222 other cell types or tissues"/>
</dbReference>
<dbReference type="ExpressionAtlas" id="Q8BGR8">
    <property type="expression patterns" value="baseline and differential"/>
</dbReference>
<dbReference type="GO" id="GO:0005737">
    <property type="term" value="C:cytoplasm"/>
    <property type="evidence" value="ECO:0000250"/>
    <property type="project" value="UniProtKB"/>
</dbReference>
<dbReference type="GO" id="GO:0005634">
    <property type="term" value="C:nucleus"/>
    <property type="evidence" value="ECO:0000250"/>
    <property type="project" value="UniProtKB"/>
</dbReference>
<dbReference type="GO" id="GO:0048471">
    <property type="term" value="C:perinuclear region of cytoplasm"/>
    <property type="evidence" value="ECO:0000250"/>
    <property type="project" value="BHF-UCL"/>
</dbReference>
<dbReference type="GO" id="GO:0034237">
    <property type="term" value="F:protein kinase A regulatory subunit binding"/>
    <property type="evidence" value="ECO:0007669"/>
    <property type="project" value="Ensembl"/>
</dbReference>
<dbReference type="GO" id="GO:0019901">
    <property type="term" value="F:protein kinase binding"/>
    <property type="evidence" value="ECO:0007669"/>
    <property type="project" value="Ensembl"/>
</dbReference>
<dbReference type="GO" id="GO:0004860">
    <property type="term" value="F:protein kinase inhibitor activity"/>
    <property type="evidence" value="ECO:0000250"/>
    <property type="project" value="UniProtKB"/>
</dbReference>
<dbReference type="GO" id="GO:0008631">
    <property type="term" value="P:intrinsic apoptotic signaling pathway in response to oxidative stress"/>
    <property type="evidence" value="ECO:0000250"/>
    <property type="project" value="UniProtKB"/>
</dbReference>
<dbReference type="GO" id="GO:0006469">
    <property type="term" value="P:negative regulation of protein kinase activity"/>
    <property type="evidence" value="ECO:0000250"/>
    <property type="project" value="UniProtKB"/>
</dbReference>
<dbReference type="GO" id="GO:0090263">
    <property type="term" value="P:positive regulation of canonical Wnt signaling pathway"/>
    <property type="evidence" value="ECO:0000250"/>
    <property type="project" value="UniProtKB"/>
</dbReference>
<dbReference type="GO" id="GO:0030111">
    <property type="term" value="P:regulation of Wnt signaling pathway"/>
    <property type="evidence" value="ECO:0000250"/>
    <property type="project" value="UniProtKB"/>
</dbReference>
<dbReference type="FunFam" id="3.30.2280.10:FF:000003">
    <property type="entry name" value="GSK3-beta interaction protein"/>
    <property type="match status" value="1"/>
</dbReference>
<dbReference type="Gene3D" id="3.30.2280.10">
    <property type="entry name" value="Hypothetical protein (hspc210)"/>
    <property type="match status" value="1"/>
</dbReference>
<dbReference type="InterPro" id="IPR037395">
    <property type="entry name" value="GSKIP"/>
</dbReference>
<dbReference type="InterPro" id="IPR007967">
    <property type="entry name" value="GSKIP_dom"/>
</dbReference>
<dbReference type="InterPro" id="IPR023231">
    <property type="entry name" value="GSKIP_dom_sf"/>
</dbReference>
<dbReference type="PANTHER" id="PTHR12490">
    <property type="entry name" value="GSK3B-INTERACTING PROTEIN"/>
    <property type="match status" value="1"/>
</dbReference>
<dbReference type="PANTHER" id="PTHR12490:SF4">
    <property type="entry name" value="GSK3B-INTERACTING PROTEIN"/>
    <property type="match status" value="1"/>
</dbReference>
<dbReference type="Pfam" id="PF05303">
    <property type="entry name" value="GSKIP_dom"/>
    <property type="match status" value="1"/>
</dbReference>
<dbReference type="SUPFAM" id="SSF103107">
    <property type="entry name" value="Hypothetical protein c14orf129, hspc210"/>
    <property type="match status" value="1"/>
</dbReference>
<feature type="chain" id="PRO_0000220952" description="GSK3B-interacting protein">
    <location>
        <begin position="1"/>
        <end position="139"/>
    </location>
</feature>
<feature type="region of interest" description="Required for PRKAR2A interaction; contributes to a protective effect against H(2)O(2)-induced apoptosis" evidence="1">
    <location>
        <begin position="41"/>
        <end position="45"/>
    </location>
</feature>
<feature type="region of interest" description="Interaction with GSK3B and acts as a GSK3B inhibitor" evidence="1">
    <location>
        <begin position="115"/>
        <end position="139"/>
    </location>
</feature>
<feature type="site" description="Required for GSK3B interaction; contributes to a protective effect against H(2)O(2)-induced apoptosis" evidence="1">
    <location>
        <position position="130"/>
    </location>
</feature>
<feature type="splice variant" id="VSP_008199" description="In isoform 2." evidence="3">
    <original>M</original>
    <variation>MGARRM</variation>
    <location>
        <position position="1"/>
    </location>
</feature>
<feature type="sequence conflict" description="In Ref. 1; BAC26470." evidence="4" ref="1">
    <original>N</original>
    <variation>S</variation>
    <location>
        <position position="6"/>
    </location>
</feature>
<keyword id="KW-0025">Alternative splicing</keyword>
<keyword id="KW-0963">Cytoplasm</keyword>
<keyword id="KW-0539">Nucleus</keyword>
<keyword id="KW-1185">Reference proteome</keyword>
<sequence>METDYNPVELSSMSGFEEGSELNGFEGADMKDMQLEAEAVVNDVLFAVNHMFVSKSMPCADDVAYINVETKERNRYCLELTEAGLRVVGYAFDQVEDHLQTPYHETVYSLLDTLSPAYREAFGNALLQRLEALKRDGQS</sequence>
<comment type="function">
    <text evidence="1 2">A-kinase anchoring protein for GSK3B and PKA that regulates or facilitates their kinase activity towards their targets. The ternary complex enhances Wnt-induced signaling by facilitating the GSK3B- and PKA-induced phosphorylation of beta-catenin leading to beta-catenin degradation and stabilization respectively. Upon cAMP activation, the ternary complex contributes to neuroprotection against oxidative stress-induced apoptosis by facilitating the PKA-induced phosphorylation of DML1 and PKA-induced inactivation of GSK3B. During neurite outgrowth promotes neuron proliferation; while increases beta-catenin-induced transcriptional activity through GSK3B kinase activity inhibition, reduces N-cadherin level to promote cell cycle progression (By similarity). May play a role in cleft palate formation and is required for postnatal life through modulation of the activity of GSK3B during development (PubMed:26582204).</text>
</comment>
<comment type="subunit">
    <text evidence="1">Forms a complex composed of PRKAR2A or PRKAR2B, GSK3B and GSKIP through GSKIP interaction; facilitates PKA-induced phosphorylation of GSK3B leading to GSK3B inactivation; recruits DNM1L through GSK3B for PKA-mediated phosphorylation of DNM1L; promotes beta-catenin degradation through GSK3B-induced phosphorylation of beta-catenin; stabilizes beta-catenin and enhances Wnt-induced signaling through PKA-induced phosphorylation of beta-catenin. Interacts with GSK3B; induces GSK3B-mediated phosphorylation of GSKIP and inhibits GSK3B kinase activity.</text>
</comment>
<comment type="subcellular location">
    <subcellularLocation>
        <location evidence="1">Cytoplasm</location>
    </subcellularLocation>
    <subcellularLocation>
        <location evidence="1">Nucleus</location>
    </subcellularLocation>
</comment>
<comment type="alternative products">
    <event type="alternative splicing"/>
    <isoform>
        <id>Q8BGR8-1</id>
        <name>1</name>
        <sequence type="displayed"/>
    </isoform>
    <isoform>
        <id>Q8BGR8-2</id>
        <name>2</name>
        <sequence type="described" ref="VSP_008199"/>
    </isoform>
</comment>
<comment type="PTM">
    <text evidence="1">Phosphorylated by GSK3B.</text>
</comment>
<comment type="disruption phenotype">
    <text evidence="2">Knockout Gskip mice die at birth. At 18.5 dpc, embryos are still alive but rapidly die within 5 to 30 minutes after casarean section. Embryos obtained at 18.5 dpc are cyanotic, suffer from respiratory distress, and fail to initiate breathing properly.</text>
</comment>
<comment type="similarity">
    <text evidence="4">Belongs to the GSKIP family.</text>
</comment>
<accession>Q8BGR8</accession>
<accession>Q8CDW3</accession>
<accession>Q8K2G9</accession>